<proteinExistence type="inferred from homology"/>
<feature type="chain" id="PRO_1000085532" description="Protein-methionine-sulfoxide reductase heme-binding subunit MsrQ">
    <location>
        <begin position="1"/>
        <end position="199"/>
    </location>
</feature>
<feature type="transmembrane region" description="Helical" evidence="1">
    <location>
        <begin position="10"/>
        <end position="30"/>
    </location>
</feature>
<feature type="transmembrane region" description="Helical" evidence="1">
    <location>
        <begin position="82"/>
        <end position="102"/>
    </location>
</feature>
<feature type="transmembrane region" description="Helical" evidence="1">
    <location>
        <begin position="116"/>
        <end position="136"/>
    </location>
</feature>
<feature type="transmembrane region" description="Helical" evidence="1">
    <location>
        <begin position="153"/>
        <end position="173"/>
    </location>
</feature>
<dbReference type="EMBL" id="AE017220">
    <property type="protein sequence ID" value="AAX67222.1"/>
    <property type="molecule type" value="Genomic_DNA"/>
</dbReference>
<dbReference type="RefSeq" id="WP_001240053.1">
    <property type="nucleotide sequence ID" value="NC_006905.1"/>
</dbReference>
<dbReference type="SMR" id="Q57J90"/>
<dbReference type="KEGG" id="sec:SCH_3316"/>
<dbReference type="HOGENOM" id="CLU_080662_1_0_6"/>
<dbReference type="Proteomes" id="UP000000538">
    <property type="component" value="Chromosome"/>
</dbReference>
<dbReference type="GO" id="GO:0005886">
    <property type="term" value="C:plasma membrane"/>
    <property type="evidence" value="ECO:0007669"/>
    <property type="project" value="UniProtKB-SubCell"/>
</dbReference>
<dbReference type="GO" id="GO:0009055">
    <property type="term" value="F:electron transfer activity"/>
    <property type="evidence" value="ECO:0007669"/>
    <property type="project" value="UniProtKB-UniRule"/>
</dbReference>
<dbReference type="GO" id="GO:0010181">
    <property type="term" value="F:FMN binding"/>
    <property type="evidence" value="ECO:0007669"/>
    <property type="project" value="UniProtKB-UniRule"/>
</dbReference>
<dbReference type="GO" id="GO:0020037">
    <property type="term" value="F:heme binding"/>
    <property type="evidence" value="ECO:0007669"/>
    <property type="project" value="UniProtKB-UniRule"/>
</dbReference>
<dbReference type="GO" id="GO:0046872">
    <property type="term" value="F:metal ion binding"/>
    <property type="evidence" value="ECO:0007669"/>
    <property type="project" value="UniProtKB-KW"/>
</dbReference>
<dbReference type="GO" id="GO:0016679">
    <property type="term" value="F:oxidoreductase activity, acting on diphenols and related substances as donors"/>
    <property type="evidence" value="ECO:0007669"/>
    <property type="project" value="TreeGrafter"/>
</dbReference>
<dbReference type="GO" id="GO:0030091">
    <property type="term" value="P:protein repair"/>
    <property type="evidence" value="ECO:0007669"/>
    <property type="project" value="UniProtKB-UniRule"/>
</dbReference>
<dbReference type="HAMAP" id="MF_01207">
    <property type="entry name" value="MsrQ"/>
    <property type="match status" value="1"/>
</dbReference>
<dbReference type="InterPro" id="IPR013130">
    <property type="entry name" value="Fe3_Rdtase_TM_dom"/>
</dbReference>
<dbReference type="InterPro" id="IPR022837">
    <property type="entry name" value="MsrQ-like"/>
</dbReference>
<dbReference type="NCBIfam" id="NF003831">
    <property type="entry name" value="PRK05419.1-2"/>
    <property type="match status" value="1"/>
</dbReference>
<dbReference type="NCBIfam" id="NF003832">
    <property type="entry name" value="PRK05419.1-4"/>
    <property type="match status" value="1"/>
</dbReference>
<dbReference type="PANTHER" id="PTHR36964">
    <property type="entry name" value="PROTEIN-METHIONINE-SULFOXIDE REDUCTASE HEME-BINDING SUBUNIT MSRQ"/>
    <property type="match status" value="1"/>
</dbReference>
<dbReference type="PANTHER" id="PTHR36964:SF1">
    <property type="entry name" value="PROTEIN-METHIONINE-SULFOXIDE REDUCTASE HEME-BINDING SUBUNIT MSRQ"/>
    <property type="match status" value="1"/>
</dbReference>
<dbReference type="Pfam" id="PF01794">
    <property type="entry name" value="Ferric_reduct"/>
    <property type="match status" value="1"/>
</dbReference>
<sequence>MRLTAKQITWLKVCLHLAGFLPLLWLFWAINHGGLSADPVKDIQHFTGRTALKFLLATLLVSPLARYAKQPLLIRTRRLLGLWCFVWATLHLTSYALLELGIHNLALLGSELISRPYLTLGIISWLVLLALTLTSTQFAQRKLGKRWQTLHNVVYLVAILAPIHYLWSVKILSPQPVIYAALALALLALRYRKFRQWWR</sequence>
<comment type="function">
    <text evidence="1">Part of the MsrPQ system that repairs oxidized periplasmic proteins containing methionine sulfoxide residues (Met-O), using respiratory chain electrons. Thus protects these proteins from oxidative-stress damage caused by reactive species of oxygen and chlorine generated by the host defense mechanisms. MsrPQ is essential for the maintenance of envelope integrity under bleach stress, rescuing a wide series of structurally unrelated periplasmic proteins from methionine oxidation, including the primary periplasmic chaperone SurA and the lipoprotein Pal. MsrQ provides electrons for reduction to the reductase catalytic subunit MsrP, using the quinone pool of the respiratory chain.</text>
</comment>
<comment type="cofactor">
    <cofactor evidence="1">
        <name>FMN</name>
        <dbReference type="ChEBI" id="CHEBI:58210"/>
    </cofactor>
    <text evidence="1">Binds 1 FMN per subunit.</text>
</comment>
<comment type="cofactor">
    <cofactor evidence="1">
        <name>heme b</name>
        <dbReference type="ChEBI" id="CHEBI:60344"/>
    </cofactor>
    <text evidence="1">Binds 1 heme b (iron(II)-protoporphyrin IX) group per subunit.</text>
</comment>
<comment type="subunit">
    <text evidence="1">Heterodimer of a catalytic subunit (MsrP) and a heme-binding subunit (MsrQ).</text>
</comment>
<comment type="subcellular location">
    <subcellularLocation>
        <location evidence="1">Cell inner membrane</location>
        <topology evidence="1">Multi-pass membrane protein</topology>
    </subcellularLocation>
</comment>
<comment type="similarity">
    <text evidence="1">Belongs to the MsrQ family.</text>
</comment>
<organism>
    <name type="scientific">Salmonella choleraesuis (strain SC-B67)</name>
    <dbReference type="NCBI Taxonomy" id="321314"/>
    <lineage>
        <taxon>Bacteria</taxon>
        <taxon>Pseudomonadati</taxon>
        <taxon>Pseudomonadota</taxon>
        <taxon>Gammaproteobacteria</taxon>
        <taxon>Enterobacterales</taxon>
        <taxon>Enterobacteriaceae</taxon>
        <taxon>Salmonella</taxon>
    </lineage>
</organism>
<gene>
    <name evidence="1" type="primary">msrQ</name>
    <name type="ordered locus">SCH_3316</name>
</gene>
<name>MSRQ_SALCH</name>
<protein>
    <recommendedName>
        <fullName evidence="1">Protein-methionine-sulfoxide reductase heme-binding subunit MsrQ</fullName>
    </recommendedName>
    <alternativeName>
        <fullName evidence="1">Flavocytochrome MsrQ</fullName>
    </alternativeName>
</protein>
<evidence type="ECO:0000255" key="1">
    <source>
        <dbReference type="HAMAP-Rule" id="MF_01207"/>
    </source>
</evidence>
<reference key="1">
    <citation type="journal article" date="2005" name="Nucleic Acids Res.">
        <title>The genome sequence of Salmonella enterica serovar Choleraesuis, a highly invasive and resistant zoonotic pathogen.</title>
        <authorList>
            <person name="Chiu C.-H."/>
            <person name="Tang P."/>
            <person name="Chu C."/>
            <person name="Hu S."/>
            <person name="Bao Q."/>
            <person name="Yu J."/>
            <person name="Chou Y.-Y."/>
            <person name="Wang H.-S."/>
            <person name="Lee Y.-S."/>
        </authorList>
    </citation>
    <scope>NUCLEOTIDE SEQUENCE [LARGE SCALE GENOMIC DNA]</scope>
    <source>
        <strain>SC-B67</strain>
    </source>
</reference>
<keyword id="KW-0997">Cell inner membrane</keyword>
<keyword id="KW-1003">Cell membrane</keyword>
<keyword id="KW-0249">Electron transport</keyword>
<keyword id="KW-0285">Flavoprotein</keyword>
<keyword id="KW-0288">FMN</keyword>
<keyword id="KW-0349">Heme</keyword>
<keyword id="KW-0408">Iron</keyword>
<keyword id="KW-0472">Membrane</keyword>
<keyword id="KW-0479">Metal-binding</keyword>
<keyword id="KW-0812">Transmembrane</keyword>
<keyword id="KW-1133">Transmembrane helix</keyword>
<keyword id="KW-0813">Transport</keyword>
<accession>Q57J90</accession>